<evidence type="ECO:0000255" key="1">
    <source>
        <dbReference type="HAMAP-Rule" id="MF_00337"/>
    </source>
</evidence>
<keyword id="KW-0963">Cytoplasm</keyword>
<keyword id="KW-0269">Exonuclease</keyword>
<keyword id="KW-0378">Hydrolase</keyword>
<keyword id="KW-0540">Nuclease</keyword>
<keyword id="KW-1185">Reference proteome</keyword>
<proteinExistence type="inferred from homology"/>
<accession>P67464</accession>
<accession>Q8E165</accession>
<accession>Q8E6M0</accession>
<gene>
    <name evidence="1" type="primary">xseB</name>
    <name type="ordered locus">SAG0497</name>
</gene>
<dbReference type="EC" id="3.1.11.6" evidence="1"/>
<dbReference type="EMBL" id="AE009948">
    <property type="protein sequence ID" value="AAM99399.1"/>
    <property type="molecule type" value="Genomic_DNA"/>
</dbReference>
<dbReference type="RefSeq" id="NP_687527.1">
    <property type="nucleotide sequence ID" value="NC_004116.1"/>
</dbReference>
<dbReference type="RefSeq" id="WP_001280900.1">
    <property type="nucleotide sequence ID" value="NC_004116.1"/>
</dbReference>
<dbReference type="SMR" id="P67464"/>
<dbReference type="STRING" id="208435.SAG0497"/>
<dbReference type="KEGG" id="sag:SAG0497"/>
<dbReference type="PATRIC" id="fig|208435.3.peg.494"/>
<dbReference type="HOGENOM" id="CLU_145918_3_2_9"/>
<dbReference type="OrthoDB" id="9798666at2"/>
<dbReference type="Proteomes" id="UP000000821">
    <property type="component" value="Chromosome"/>
</dbReference>
<dbReference type="GO" id="GO:0005829">
    <property type="term" value="C:cytosol"/>
    <property type="evidence" value="ECO:0007669"/>
    <property type="project" value="TreeGrafter"/>
</dbReference>
<dbReference type="GO" id="GO:0009318">
    <property type="term" value="C:exodeoxyribonuclease VII complex"/>
    <property type="evidence" value="ECO:0007669"/>
    <property type="project" value="InterPro"/>
</dbReference>
<dbReference type="GO" id="GO:0008855">
    <property type="term" value="F:exodeoxyribonuclease VII activity"/>
    <property type="evidence" value="ECO:0007669"/>
    <property type="project" value="UniProtKB-UniRule"/>
</dbReference>
<dbReference type="GO" id="GO:0006308">
    <property type="term" value="P:DNA catabolic process"/>
    <property type="evidence" value="ECO:0007669"/>
    <property type="project" value="UniProtKB-UniRule"/>
</dbReference>
<dbReference type="Gene3D" id="1.10.287.1040">
    <property type="entry name" value="Exonuclease VII, small subunit"/>
    <property type="match status" value="1"/>
</dbReference>
<dbReference type="HAMAP" id="MF_00337">
    <property type="entry name" value="Exonuc_7_S"/>
    <property type="match status" value="1"/>
</dbReference>
<dbReference type="InterPro" id="IPR003761">
    <property type="entry name" value="Exonuc_VII_S"/>
</dbReference>
<dbReference type="InterPro" id="IPR037004">
    <property type="entry name" value="Exonuc_VII_ssu_sf"/>
</dbReference>
<dbReference type="NCBIfam" id="NF002138">
    <property type="entry name" value="PRK00977.1-2"/>
    <property type="match status" value="1"/>
</dbReference>
<dbReference type="NCBIfam" id="TIGR01280">
    <property type="entry name" value="xseB"/>
    <property type="match status" value="1"/>
</dbReference>
<dbReference type="PANTHER" id="PTHR34137">
    <property type="entry name" value="EXODEOXYRIBONUCLEASE 7 SMALL SUBUNIT"/>
    <property type="match status" value="1"/>
</dbReference>
<dbReference type="PANTHER" id="PTHR34137:SF1">
    <property type="entry name" value="EXODEOXYRIBONUCLEASE 7 SMALL SUBUNIT"/>
    <property type="match status" value="1"/>
</dbReference>
<dbReference type="Pfam" id="PF02609">
    <property type="entry name" value="Exonuc_VII_S"/>
    <property type="match status" value="1"/>
</dbReference>
<dbReference type="PIRSF" id="PIRSF006488">
    <property type="entry name" value="Exonuc_VII_S"/>
    <property type="match status" value="1"/>
</dbReference>
<dbReference type="SUPFAM" id="SSF116842">
    <property type="entry name" value="XseB-like"/>
    <property type="match status" value="1"/>
</dbReference>
<name>EX7S_STRA5</name>
<reference key="1">
    <citation type="journal article" date="2002" name="Proc. Natl. Acad. Sci. U.S.A.">
        <title>Complete genome sequence and comparative genomic analysis of an emerging human pathogen, serotype V Streptococcus agalactiae.</title>
        <authorList>
            <person name="Tettelin H."/>
            <person name="Masignani V."/>
            <person name="Cieslewicz M.J."/>
            <person name="Eisen J.A."/>
            <person name="Peterson S.N."/>
            <person name="Wessels M.R."/>
            <person name="Paulsen I.T."/>
            <person name="Nelson K.E."/>
            <person name="Margarit I."/>
            <person name="Read T.D."/>
            <person name="Madoff L.C."/>
            <person name="Wolf A.M."/>
            <person name="Beanan M.J."/>
            <person name="Brinkac L.M."/>
            <person name="Daugherty S.C."/>
            <person name="DeBoy R.T."/>
            <person name="Durkin A.S."/>
            <person name="Kolonay J.F."/>
            <person name="Madupu R."/>
            <person name="Lewis M.R."/>
            <person name="Radune D."/>
            <person name="Fedorova N.B."/>
            <person name="Scanlan D."/>
            <person name="Khouri H.M."/>
            <person name="Mulligan S."/>
            <person name="Carty H.A."/>
            <person name="Cline R.T."/>
            <person name="Van Aken S.E."/>
            <person name="Gill J."/>
            <person name="Scarselli M."/>
            <person name="Mora M."/>
            <person name="Iacobini E.T."/>
            <person name="Brettoni C."/>
            <person name="Galli G."/>
            <person name="Mariani M."/>
            <person name="Vegni F."/>
            <person name="Maione D."/>
            <person name="Rinaudo D."/>
            <person name="Rappuoli R."/>
            <person name="Telford J.L."/>
            <person name="Kasper D.L."/>
            <person name="Grandi G."/>
            <person name="Fraser C.M."/>
        </authorList>
    </citation>
    <scope>NUCLEOTIDE SEQUENCE [LARGE SCALE GENOMIC DNA]</scope>
    <source>
        <strain>ATCC BAA-611 / 2603 V/R</strain>
    </source>
</reference>
<feature type="chain" id="PRO_0000207012" description="Exodeoxyribonuclease 7 small subunit">
    <location>
        <begin position="1"/>
        <end position="71"/>
    </location>
</feature>
<comment type="function">
    <text evidence="1">Bidirectionally degrades single-stranded DNA into large acid-insoluble oligonucleotides, which are then degraded further into small acid-soluble oligonucleotides.</text>
</comment>
<comment type="catalytic activity">
    <reaction evidence="1">
        <text>Exonucleolytic cleavage in either 5'- to 3'- or 3'- to 5'-direction to yield nucleoside 5'-phosphates.</text>
        <dbReference type="EC" id="3.1.11.6"/>
    </reaction>
</comment>
<comment type="subunit">
    <text evidence="1">Heterooligomer composed of large and small subunits.</text>
</comment>
<comment type="subcellular location">
    <subcellularLocation>
        <location evidence="1">Cytoplasm</location>
    </subcellularLocation>
</comment>
<comment type="similarity">
    <text evidence="1">Belongs to the XseB family.</text>
</comment>
<protein>
    <recommendedName>
        <fullName evidence="1">Exodeoxyribonuclease 7 small subunit</fullName>
        <ecNumber evidence="1">3.1.11.6</ecNumber>
    </recommendedName>
    <alternativeName>
        <fullName evidence="1">Exodeoxyribonuclease VII small subunit</fullName>
        <shortName evidence="1">Exonuclease VII small subunit</shortName>
    </alternativeName>
</protein>
<organism>
    <name type="scientific">Streptococcus agalactiae serotype V (strain ATCC BAA-611 / 2603 V/R)</name>
    <dbReference type="NCBI Taxonomy" id="208435"/>
    <lineage>
        <taxon>Bacteria</taxon>
        <taxon>Bacillati</taxon>
        <taxon>Bacillota</taxon>
        <taxon>Bacilli</taxon>
        <taxon>Lactobacillales</taxon>
        <taxon>Streptococcaceae</taxon>
        <taxon>Streptococcus</taxon>
    </lineage>
</organism>
<sequence>MSDKKTFEENLQELETIVSRLETGDVALEDAIAEFQKGMLISKELQRTLKEAEETLVKVMQADGTEVEMDT</sequence>